<comment type="function">
    <text evidence="1">Together with the chaperonin GroEL, plays an essential role in assisting protein folding. The GroEL-GroES system forms a nano-cage that allows encapsulation of the non-native substrate proteins and provides a physical environment optimized to promote and accelerate protein folding. GroES binds to the apical surface of the GroEL ring, thereby capping the opening of the GroEL channel.</text>
</comment>
<comment type="subunit">
    <text evidence="1">Heptamer of 7 subunits arranged in a ring. Interacts with the chaperonin GroEL.</text>
</comment>
<comment type="subcellular location">
    <subcellularLocation>
        <location evidence="1">Cytoplasm</location>
    </subcellularLocation>
</comment>
<comment type="similarity">
    <text evidence="1">Belongs to the GroES chaperonin family.</text>
</comment>
<dbReference type="EMBL" id="CP001177">
    <property type="protein sequence ID" value="ACJ77555.1"/>
    <property type="molecule type" value="Genomic_DNA"/>
</dbReference>
<dbReference type="SMR" id="B7HS04"/>
<dbReference type="KEGG" id="bcr:BCAH187_A0316"/>
<dbReference type="HOGENOM" id="CLU_132825_2_0_9"/>
<dbReference type="Proteomes" id="UP000002214">
    <property type="component" value="Chromosome"/>
</dbReference>
<dbReference type="GO" id="GO:0005737">
    <property type="term" value="C:cytoplasm"/>
    <property type="evidence" value="ECO:0007669"/>
    <property type="project" value="UniProtKB-SubCell"/>
</dbReference>
<dbReference type="GO" id="GO:0005524">
    <property type="term" value="F:ATP binding"/>
    <property type="evidence" value="ECO:0007669"/>
    <property type="project" value="InterPro"/>
</dbReference>
<dbReference type="GO" id="GO:0046872">
    <property type="term" value="F:metal ion binding"/>
    <property type="evidence" value="ECO:0007669"/>
    <property type="project" value="TreeGrafter"/>
</dbReference>
<dbReference type="GO" id="GO:0044183">
    <property type="term" value="F:protein folding chaperone"/>
    <property type="evidence" value="ECO:0007669"/>
    <property type="project" value="InterPro"/>
</dbReference>
<dbReference type="GO" id="GO:0051087">
    <property type="term" value="F:protein-folding chaperone binding"/>
    <property type="evidence" value="ECO:0007669"/>
    <property type="project" value="TreeGrafter"/>
</dbReference>
<dbReference type="GO" id="GO:0051082">
    <property type="term" value="F:unfolded protein binding"/>
    <property type="evidence" value="ECO:0007669"/>
    <property type="project" value="TreeGrafter"/>
</dbReference>
<dbReference type="GO" id="GO:0051085">
    <property type="term" value="P:chaperone cofactor-dependent protein refolding"/>
    <property type="evidence" value="ECO:0007669"/>
    <property type="project" value="TreeGrafter"/>
</dbReference>
<dbReference type="CDD" id="cd00320">
    <property type="entry name" value="cpn10"/>
    <property type="match status" value="1"/>
</dbReference>
<dbReference type="FunFam" id="2.30.33.40:FF:000001">
    <property type="entry name" value="10 kDa chaperonin"/>
    <property type="match status" value="1"/>
</dbReference>
<dbReference type="Gene3D" id="2.30.33.40">
    <property type="entry name" value="GroES chaperonin"/>
    <property type="match status" value="1"/>
</dbReference>
<dbReference type="HAMAP" id="MF_00580">
    <property type="entry name" value="CH10"/>
    <property type="match status" value="1"/>
</dbReference>
<dbReference type="InterPro" id="IPR020818">
    <property type="entry name" value="Chaperonin_GroES"/>
</dbReference>
<dbReference type="InterPro" id="IPR037124">
    <property type="entry name" value="Chaperonin_GroES_sf"/>
</dbReference>
<dbReference type="InterPro" id="IPR018369">
    <property type="entry name" value="Chaprnonin_Cpn10_CS"/>
</dbReference>
<dbReference type="InterPro" id="IPR011032">
    <property type="entry name" value="GroES-like_sf"/>
</dbReference>
<dbReference type="NCBIfam" id="NF001527">
    <property type="entry name" value="PRK00364.1-2"/>
    <property type="match status" value="1"/>
</dbReference>
<dbReference type="NCBIfam" id="NF001530">
    <property type="entry name" value="PRK00364.1-6"/>
    <property type="match status" value="1"/>
</dbReference>
<dbReference type="NCBIfam" id="NF001531">
    <property type="entry name" value="PRK00364.2-2"/>
    <property type="match status" value="1"/>
</dbReference>
<dbReference type="NCBIfam" id="NF001533">
    <property type="entry name" value="PRK00364.2-4"/>
    <property type="match status" value="1"/>
</dbReference>
<dbReference type="NCBIfam" id="NF001534">
    <property type="entry name" value="PRK00364.2-5"/>
    <property type="match status" value="1"/>
</dbReference>
<dbReference type="PANTHER" id="PTHR10772">
    <property type="entry name" value="10 KDA HEAT SHOCK PROTEIN"/>
    <property type="match status" value="1"/>
</dbReference>
<dbReference type="PANTHER" id="PTHR10772:SF58">
    <property type="entry name" value="CO-CHAPERONIN GROES"/>
    <property type="match status" value="1"/>
</dbReference>
<dbReference type="Pfam" id="PF00166">
    <property type="entry name" value="Cpn10"/>
    <property type="match status" value="1"/>
</dbReference>
<dbReference type="PRINTS" id="PR00297">
    <property type="entry name" value="CHAPERONIN10"/>
</dbReference>
<dbReference type="SMART" id="SM00883">
    <property type="entry name" value="Cpn10"/>
    <property type="match status" value="1"/>
</dbReference>
<dbReference type="SUPFAM" id="SSF50129">
    <property type="entry name" value="GroES-like"/>
    <property type="match status" value="1"/>
</dbReference>
<dbReference type="PROSITE" id="PS00681">
    <property type="entry name" value="CHAPERONINS_CPN10"/>
    <property type="match status" value="1"/>
</dbReference>
<proteinExistence type="inferred from homology"/>
<sequence length="94" mass="10070">MLKPLGDRVVIELVQAEEKTASGIVLPDTAKEKPQEGKVIAVGTGRVLENGERVALEVAAGDLIIFSKYAGTEVKYEGTDYLILRESDILAVIG</sequence>
<feature type="chain" id="PRO_1000129625" description="Co-chaperonin GroES">
    <location>
        <begin position="1"/>
        <end position="94"/>
    </location>
</feature>
<organism>
    <name type="scientific">Bacillus cereus (strain AH187)</name>
    <dbReference type="NCBI Taxonomy" id="405534"/>
    <lineage>
        <taxon>Bacteria</taxon>
        <taxon>Bacillati</taxon>
        <taxon>Bacillota</taxon>
        <taxon>Bacilli</taxon>
        <taxon>Bacillales</taxon>
        <taxon>Bacillaceae</taxon>
        <taxon>Bacillus</taxon>
        <taxon>Bacillus cereus group</taxon>
    </lineage>
</organism>
<accession>B7HS04</accession>
<gene>
    <name evidence="1" type="primary">groES</name>
    <name evidence="1" type="synonym">groS</name>
    <name type="ordered locus">BCAH187_A0316</name>
</gene>
<name>CH10_BACC7</name>
<protein>
    <recommendedName>
        <fullName evidence="1">Co-chaperonin GroES</fullName>
    </recommendedName>
    <alternativeName>
        <fullName evidence="1">10 kDa chaperonin</fullName>
    </alternativeName>
    <alternativeName>
        <fullName evidence="1">Chaperonin-10</fullName>
        <shortName evidence="1">Cpn10</shortName>
    </alternativeName>
</protein>
<reference key="1">
    <citation type="submission" date="2008-10" db="EMBL/GenBank/DDBJ databases">
        <title>Genome sequence of Bacillus cereus AH187.</title>
        <authorList>
            <person name="Dodson R.J."/>
            <person name="Durkin A.S."/>
            <person name="Rosovitz M.J."/>
            <person name="Rasko D.A."/>
            <person name="Kolsto A.B."/>
            <person name="Okstad O.A."/>
            <person name="Ravel J."/>
            <person name="Sutton G."/>
        </authorList>
    </citation>
    <scope>NUCLEOTIDE SEQUENCE [LARGE SCALE GENOMIC DNA]</scope>
    <source>
        <strain>AH187</strain>
    </source>
</reference>
<evidence type="ECO:0000255" key="1">
    <source>
        <dbReference type="HAMAP-Rule" id="MF_00580"/>
    </source>
</evidence>
<keyword id="KW-0143">Chaperone</keyword>
<keyword id="KW-0963">Cytoplasm</keyword>